<organism>
    <name type="scientific">Thermosipho melanesiensis (strain DSM 12029 / CIP 104789 / BI429)</name>
    <dbReference type="NCBI Taxonomy" id="391009"/>
    <lineage>
        <taxon>Bacteria</taxon>
        <taxon>Thermotogati</taxon>
        <taxon>Thermotogota</taxon>
        <taxon>Thermotogae</taxon>
        <taxon>Thermotogales</taxon>
        <taxon>Fervidobacteriaceae</taxon>
        <taxon>Thermosipho</taxon>
    </lineage>
</organism>
<comment type="function">
    <text evidence="1">Catalyzes the phosphorylation of pantothenate (Pan), the first step in CoA biosynthesis.</text>
</comment>
<comment type="catalytic activity">
    <reaction evidence="1">
        <text>(R)-pantothenate + ATP = (R)-4'-phosphopantothenate + ADP + H(+)</text>
        <dbReference type="Rhea" id="RHEA:16373"/>
        <dbReference type="ChEBI" id="CHEBI:10986"/>
        <dbReference type="ChEBI" id="CHEBI:15378"/>
        <dbReference type="ChEBI" id="CHEBI:29032"/>
        <dbReference type="ChEBI" id="CHEBI:30616"/>
        <dbReference type="ChEBI" id="CHEBI:456216"/>
        <dbReference type="EC" id="2.7.1.33"/>
    </reaction>
</comment>
<comment type="cofactor">
    <cofactor evidence="1">
        <name>NH4(+)</name>
        <dbReference type="ChEBI" id="CHEBI:28938"/>
    </cofactor>
    <cofactor evidence="1">
        <name>K(+)</name>
        <dbReference type="ChEBI" id="CHEBI:29103"/>
    </cofactor>
    <text evidence="1">A monovalent cation. Ammonium or potassium.</text>
</comment>
<comment type="pathway">
    <text evidence="1">Cofactor biosynthesis; coenzyme A biosynthesis; CoA from (R)-pantothenate: step 1/5.</text>
</comment>
<comment type="subunit">
    <text evidence="1">Homodimer.</text>
</comment>
<comment type="subcellular location">
    <subcellularLocation>
        <location evidence="1">Cytoplasm</location>
    </subcellularLocation>
</comment>
<comment type="similarity">
    <text evidence="1">Belongs to the type III pantothenate kinase family.</text>
</comment>
<gene>
    <name evidence="1" type="primary">coaX</name>
    <name type="ordered locus">Tmel_1367</name>
</gene>
<reference key="1">
    <citation type="submission" date="2007-05" db="EMBL/GenBank/DDBJ databases">
        <title>Complete sequence of Thermosipho melanesiensis BI429.</title>
        <authorList>
            <consortium name="US DOE Joint Genome Institute"/>
            <person name="Copeland A."/>
            <person name="Lucas S."/>
            <person name="Lapidus A."/>
            <person name="Barry K."/>
            <person name="Glavina del Rio T."/>
            <person name="Dalin E."/>
            <person name="Tice H."/>
            <person name="Pitluck S."/>
            <person name="Chertkov O."/>
            <person name="Brettin T."/>
            <person name="Bruce D."/>
            <person name="Detter J.C."/>
            <person name="Han C."/>
            <person name="Schmutz J."/>
            <person name="Larimer F."/>
            <person name="Land M."/>
            <person name="Hauser L."/>
            <person name="Kyrpides N."/>
            <person name="Mikhailova N."/>
            <person name="Nelson K."/>
            <person name="Gogarten J.P."/>
            <person name="Noll K."/>
            <person name="Richardson P."/>
        </authorList>
    </citation>
    <scope>NUCLEOTIDE SEQUENCE [LARGE SCALE GENOMIC DNA]</scope>
    <source>
        <strain>DSM 12029 / CIP 104789 / BI429</strain>
    </source>
</reference>
<proteinExistence type="inferred from homology"/>
<protein>
    <recommendedName>
        <fullName evidence="1">Type III pantothenate kinase</fullName>
        <ecNumber evidence="1">2.7.1.33</ecNumber>
    </recommendedName>
    <alternativeName>
        <fullName evidence="1">PanK-III</fullName>
    </alternativeName>
    <alternativeName>
        <fullName evidence="1">Pantothenic acid kinase</fullName>
    </alternativeName>
</protein>
<accession>A6LMR3</accession>
<evidence type="ECO:0000255" key="1">
    <source>
        <dbReference type="HAMAP-Rule" id="MF_01274"/>
    </source>
</evidence>
<feature type="chain" id="PRO_1000054413" description="Type III pantothenate kinase">
    <location>
        <begin position="1"/>
        <end position="247"/>
    </location>
</feature>
<feature type="active site" description="Proton acceptor" evidence="1">
    <location>
        <position position="103"/>
    </location>
</feature>
<feature type="binding site" evidence="1">
    <location>
        <begin position="6"/>
        <end position="13"/>
    </location>
    <ligand>
        <name>ATP</name>
        <dbReference type="ChEBI" id="CHEBI:30616"/>
    </ligand>
</feature>
<feature type="binding site" evidence="1">
    <location>
        <begin position="101"/>
        <end position="104"/>
    </location>
    <ligand>
        <name>substrate</name>
    </ligand>
</feature>
<feature type="binding site" evidence="1">
    <location>
        <position position="123"/>
    </location>
    <ligand>
        <name>K(+)</name>
        <dbReference type="ChEBI" id="CHEBI:29103"/>
    </ligand>
</feature>
<feature type="binding site" evidence="1">
    <location>
        <position position="126"/>
    </location>
    <ligand>
        <name>ATP</name>
        <dbReference type="ChEBI" id="CHEBI:30616"/>
    </ligand>
</feature>
<feature type="binding site" evidence="1">
    <location>
        <position position="177"/>
    </location>
    <ligand>
        <name>substrate</name>
    </ligand>
</feature>
<sequence length="247" mass="27684">MKILFDVGNTHTTVALTENGKFFKIKRISTYSIQTEDELYAYLKVFFGETYDEVIVSSVVPNINHVFEFFSKKYAGKSAIFLNAQSYKGITWNVKIPSEIGADRVANIIAAERDYGKDAIVVDFGTAITIDILKEKSYEGGIIIPGFSMMINALFKGTAKLPKVELKPFNGFIGKDTESNIRIGIINTVVEGIGSVINKIKNENFRDVPVIFTGGQSKIIMDYKRDVIYDLELGLRGIYYFYESVVS</sequence>
<keyword id="KW-0067">ATP-binding</keyword>
<keyword id="KW-0173">Coenzyme A biosynthesis</keyword>
<keyword id="KW-0963">Cytoplasm</keyword>
<keyword id="KW-0418">Kinase</keyword>
<keyword id="KW-0479">Metal-binding</keyword>
<keyword id="KW-0547">Nucleotide-binding</keyword>
<keyword id="KW-0630">Potassium</keyword>
<keyword id="KW-0808">Transferase</keyword>
<name>COAX_THEM4</name>
<dbReference type="EC" id="2.7.1.33" evidence="1"/>
<dbReference type="EMBL" id="CP000716">
    <property type="protein sequence ID" value="ABR31214.1"/>
    <property type="molecule type" value="Genomic_DNA"/>
</dbReference>
<dbReference type="RefSeq" id="WP_012057573.1">
    <property type="nucleotide sequence ID" value="NC_009616.1"/>
</dbReference>
<dbReference type="SMR" id="A6LMR3"/>
<dbReference type="STRING" id="391009.Tmel_1367"/>
<dbReference type="KEGG" id="tme:Tmel_1367"/>
<dbReference type="eggNOG" id="COG1521">
    <property type="taxonomic scope" value="Bacteria"/>
</dbReference>
<dbReference type="HOGENOM" id="CLU_1213471_0_0_0"/>
<dbReference type="OrthoDB" id="9804707at2"/>
<dbReference type="UniPathway" id="UPA00241">
    <property type="reaction ID" value="UER00352"/>
</dbReference>
<dbReference type="Proteomes" id="UP000001110">
    <property type="component" value="Chromosome"/>
</dbReference>
<dbReference type="GO" id="GO:0005737">
    <property type="term" value="C:cytoplasm"/>
    <property type="evidence" value="ECO:0007669"/>
    <property type="project" value="UniProtKB-SubCell"/>
</dbReference>
<dbReference type="GO" id="GO:0005524">
    <property type="term" value="F:ATP binding"/>
    <property type="evidence" value="ECO:0007669"/>
    <property type="project" value="UniProtKB-UniRule"/>
</dbReference>
<dbReference type="GO" id="GO:0046872">
    <property type="term" value="F:metal ion binding"/>
    <property type="evidence" value="ECO:0007669"/>
    <property type="project" value="UniProtKB-KW"/>
</dbReference>
<dbReference type="GO" id="GO:0004594">
    <property type="term" value="F:pantothenate kinase activity"/>
    <property type="evidence" value="ECO:0007669"/>
    <property type="project" value="UniProtKB-UniRule"/>
</dbReference>
<dbReference type="GO" id="GO:0015937">
    <property type="term" value="P:coenzyme A biosynthetic process"/>
    <property type="evidence" value="ECO:0007669"/>
    <property type="project" value="UniProtKB-UniRule"/>
</dbReference>
<dbReference type="CDD" id="cd24015">
    <property type="entry name" value="ASKHA_NBD_PanK-III"/>
    <property type="match status" value="1"/>
</dbReference>
<dbReference type="Gene3D" id="3.30.420.40">
    <property type="match status" value="2"/>
</dbReference>
<dbReference type="HAMAP" id="MF_01274">
    <property type="entry name" value="Pantothen_kinase_3"/>
    <property type="match status" value="1"/>
</dbReference>
<dbReference type="InterPro" id="IPR043129">
    <property type="entry name" value="ATPase_NBD"/>
</dbReference>
<dbReference type="InterPro" id="IPR004619">
    <property type="entry name" value="Type_III_PanK"/>
</dbReference>
<dbReference type="NCBIfam" id="TIGR00671">
    <property type="entry name" value="baf"/>
    <property type="match status" value="1"/>
</dbReference>
<dbReference type="NCBIfam" id="NF009848">
    <property type="entry name" value="PRK13318.1-6"/>
    <property type="match status" value="1"/>
</dbReference>
<dbReference type="PANTHER" id="PTHR34265">
    <property type="entry name" value="TYPE III PANTOTHENATE KINASE"/>
    <property type="match status" value="1"/>
</dbReference>
<dbReference type="PANTHER" id="PTHR34265:SF1">
    <property type="entry name" value="TYPE III PANTOTHENATE KINASE"/>
    <property type="match status" value="1"/>
</dbReference>
<dbReference type="Pfam" id="PF03309">
    <property type="entry name" value="Pan_kinase"/>
    <property type="match status" value="1"/>
</dbReference>
<dbReference type="SUPFAM" id="SSF53067">
    <property type="entry name" value="Actin-like ATPase domain"/>
    <property type="match status" value="2"/>
</dbReference>